<reference key="1">
    <citation type="journal article" date="2009" name="J. Bacteriol.">
        <title>Complete genome sequence and comparative genome analysis of enteropathogenic Escherichia coli O127:H6 strain E2348/69.</title>
        <authorList>
            <person name="Iguchi A."/>
            <person name="Thomson N.R."/>
            <person name="Ogura Y."/>
            <person name="Saunders D."/>
            <person name="Ooka T."/>
            <person name="Henderson I.R."/>
            <person name="Harris D."/>
            <person name="Asadulghani M."/>
            <person name="Kurokawa K."/>
            <person name="Dean P."/>
            <person name="Kenny B."/>
            <person name="Quail M.A."/>
            <person name="Thurston S."/>
            <person name="Dougan G."/>
            <person name="Hayashi T."/>
            <person name="Parkhill J."/>
            <person name="Frankel G."/>
        </authorList>
    </citation>
    <scope>NUCLEOTIDE SEQUENCE [LARGE SCALE GENOMIC DNA]</scope>
    <source>
        <strain>E2348/69 / EPEC</strain>
    </source>
</reference>
<gene>
    <name evidence="1" type="primary">ydiB</name>
    <name type="ordered locus">E2348C_1777</name>
</gene>
<protein>
    <recommendedName>
        <fullName evidence="1">Quinate/shikimate dehydrogenase</fullName>
        <ecNumber evidence="1">1.1.1.282</ecNumber>
    </recommendedName>
    <alternativeName>
        <fullName evidence="1">NAD-dependent shikimate 5-dehydrogenase</fullName>
    </alternativeName>
</protein>
<evidence type="ECO:0000255" key="1">
    <source>
        <dbReference type="HAMAP-Rule" id="MF_01578"/>
    </source>
</evidence>
<accession>B7US31</accession>
<keyword id="KW-0028">Amino-acid biosynthesis</keyword>
<keyword id="KW-0057">Aromatic amino acid biosynthesis</keyword>
<keyword id="KW-0520">NAD</keyword>
<keyword id="KW-0521">NADP</keyword>
<keyword id="KW-0560">Oxidoreductase</keyword>
<keyword id="KW-1185">Reference proteome</keyword>
<organism>
    <name type="scientific">Escherichia coli O127:H6 (strain E2348/69 / EPEC)</name>
    <dbReference type="NCBI Taxonomy" id="574521"/>
    <lineage>
        <taxon>Bacteria</taxon>
        <taxon>Pseudomonadati</taxon>
        <taxon>Pseudomonadota</taxon>
        <taxon>Gammaproteobacteria</taxon>
        <taxon>Enterobacterales</taxon>
        <taxon>Enterobacteriaceae</taxon>
        <taxon>Escherichia</taxon>
    </lineage>
</organism>
<feature type="chain" id="PRO_1000185637" description="Quinate/shikimate dehydrogenase">
    <location>
        <begin position="1"/>
        <end position="288"/>
    </location>
</feature>
<feature type="binding site" evidence="1">
    <location>
        <position position="71"/>
    </location>
    <ligand>
        <name>substrate</name>
    </ligand>
</feature>
<feature type="binding site" evidence="1">
    <location>
        <position position="107"/>
    </location>
    <ligand>
        <name>substrate</name>
    </ligand>
</feature>
<feature type="binding site" evidence="1">
    <location>
        <begin position="132"/>
        <end position="135"/>
    </location>
    <ligand>
        <name>NAD(+)</name>
        <dbReference type="ChEBI" id="CHEBI:57540"/>
    </ligand>
</feature>
<feature type="binding site" evidence="1">
    <location>
        <begin position="155"/>
        <end position="158"/>
    </location>
    <ligand>
        <name>NAD(+)</name>
        <dbReference type="ChEBI" id="CHEBI:57540"/>
    </ligand>
</feature>
<feature type="binding site" evidence="1">
    <location>
        <position position="205"/>
    </location>
    <ligand>
        <name>NAD(+)</name>
        <dbReference type="ChEBI" id="CHEBI:57540"/>
    </ligand>
</feature>
<feature type="binding site" evidence="1">
    <location>
        <begin position="232"/>
        <end position="235"/>
    </location>
    <ligand>
        <name>NAD(+)</name>
        <dbReference type="ChEBI" id="CHEBI:57540"/>
    </ligand>
</feature>
<feature type="binding site" evidence="1">
    <location>
        <position position="255"/>
    </location>
    <ligand>
        <name>NAD(+)</name>
        <dbReference type="ChEBI" id="CHEBI:57540"/>
    </ligand>
</feature>
<dbReference type="EC" id="1.1.1.282" evidence="1"/>
<dbReference type="EMBL" id="FM180568">
    <property type="protein sequence ID" value="CAS09325.1"/>
    <property type="molecule type" value="Genomic_DNA"/>
</dbReference>
<dbReference type="RefSeq" id="WP_000383457.1">
    <property type="nucleotide sequence ID" value="NC_011601.1"/>
</dbReference>
<dbReference type="SMR" id="B7US31"/>
<dbReference type="KEGG" id="ecg:E2348C_1777"/>
<dbReference type="HOGENOM" id="CLU_044063_4_4_6"/>
<dbReference type="UniPathway" id="UPA00053">
    <property type="reaction ID" value="UER00087"/>
</dbReference>
<dbReference type="Proteomes" id="UP000008205">
    <property type="component" value="Chromosome"/>
</dbReference>
<dbReference type="GO" id="GO:0030266">
    <property type="term" value="F:quinate 3-dehydrogenase (NAD+) activity"/>
    <property type="evidence" value="ECO:0007669"/>
    <property type="project" value="UniProtKB-UniRule"/>
</dbReference>
<dbReference type="GO" id="GO:0052733">
    <property type="term" value="F:quinate 3-dehydrogenase (NADP+) activity"/>
    <property type="evidence" value="ECO:0007669"/>
    <property type="project" value="InterPro"/>
</dbReference>
<dbReference type="GO" id="GO:0052734">
    <property type="term" value="F:shikimate 3-dehydrogenase (NAD+) activity"/>
    <property type="evidence" value="ECO:0007669"/>
    <property type="project" value="InterPro"/>
</dbReference>
<dbReference type="GO" id="GO:0004764">
    <property type="term" value="F:shikimate 3-dehydrogenase (NADP+) activity"/>
    <property type="evidence" value="ECO:0007669"/>
    <property type="project" value="UniProtKB-UniRule"/>
</dbReference>
<dbReference type="GO" id="GO:0008652">
    <property type="term" value="P:amino acid biosynthetic process"/>
    <property type="evidence" value="ECO:0007669"/>
    <property type="project" value="UniProtKB-KW"/>
</dbReference>
<dbReference type="GO" id="GO:0009073">
    <property type="term" value="P:aromatic amino acid family biosynthetic process"/>
    <property type="evidence" value="ECO:0007669"/>
    <property type="project" value="UniProtKB-KW"/>
</dbReference>
<dbReference type="GO" id="GO:0009423">
    <property type="term" value="P:chorismate biosynthetic process"/>
    <property type="evidence" value="ECO:0007669"/>
    <property type="project" value="UniProtKB-UniRule"/>
</dbReference>
<dbReference type="GO" id="GO:0019632">
    <property type="term" value="P:shikimate metabolic process"/>
    <property type="evidence" value="ECO:0007669"/>
    <property type="project" value="TreeGrafter"/>
</dbReference>
<dbReference type="CDD" id="cd01065">
    <property type="entry name" value="NAD_bind_Shikimate_DH"/>
    <property type="match status" value="1"/>
</dbReference>
<dbReference type="FunFam" id="3.40.50.10860:FF:000004">
    <property type="entry name" value="Quinate/shikimate dehydrogenase"/>
    <property type="match status" value="1"/>
</dbReference>
<dbReference type="FunFam" id="3.40.50.720:FF:000086">
    <property type="entry name" value="Quinate/shikimate dehydrogenase"/>
    <property type="match status" value="1"/>
</dbReference>
<dbReference type="Gene3D" id="3.40.50.10860">
    <property type="entry name" value="Leucine Dehydrogenase, chain A, domain 1"/>
    <property type="match status" value="1"/>
</dbReference>
<dbReference type="Gene3D" id="3.40.50.720">
    <property type="entry name" value="NAD(P)-binding Rossmann-like Domain"/>
    <property type="match status" value="1"/>
</dbReference>
<dbReference type="HAMAP" id="MF_00222">
    <property type="entry name" value="Shikimate_DH_AroE"/>
    <property type="match status" value="1"/>
</dbReference>
<dbReference type="HAMAP" id="MF_01578">
    <property type="entry name" value="Shikimate_DH_YdiB"/>
    <property type="match status" value="1"/>
</dbReference>
<dbReference type="InterPro" id="IPR046346">
    <property type="entry name" value="Aminoacid_DH-like_N_sf"/>
</dbReference>
<dbReference type="InterPro" id="IPR036291">
    <property type="entry name" value="NAD(P)-bd_dom_sf"/>
</dbReference>
<dbReference type="InterPro" id="IPR022872">
    <property type="entry name" value="Quinate/Shikimate_DH"/>
</dbReference>
<dbReference type="InterPro" id="IPR041121">
    <property type="entry name" value="SDH_C"/>
</dbReference>
<dbReference type="InterPro" id="IPR013708">
    <property type="entry name" value="Shikimate_DH-bd_N"/>
</dbReference>
<dbReference type="InterPro" id="IPR022893">
    <property type="entry name" value="Shikimate_DH_fam"/>
</dbReference>
<dbReference type="NCBIfam" id="NF009390">
    <property type="entry name" value="PRK12749.1"/>
    <property type="match status" value="1"/>
</dbReference>
<dbReference type="PANTHER" id="PTHR21089:SF1">
    <property type="entry name" value="BIFUNCTIONAL 3-DEHYDROQUINATE DEHYDRATASE_SHIKIMATE DEHYDROGENASE, CHLOROPLASTIC"/>
    <property type="match status" value="1"/>
</dbReference>
<dbReference type="PANTHER" id="PTHR21089">
    <property type="entry name" value="SHIKIMATE DEHYDROGENASE"/>
    <property type="match status" value="1"/>
</dbReference>
<dbReference type="Pfam" id="PF18317">
    <property type="entry name" value="SDH_C"/>
    <property type="match status" value="1"/>
</dbReference>
<dbReference type="Pfam" id="PF08501">
    <property type="entry name" value="Shikimate_dh_N"/>
    <property type="match status" value="1"/>
</dbReference>
<dbReference type="SUPFAM" id="SSF53223">
    <property type="entry name" value="Aminoacid dehydrogenase-like, N-terminal domain"/>
    <property type="match status" value="1"/>
</dbReference>
<dbReference type="SUPFAM" id="SSF51735">
    <property type="entry name" value="NAD(P)-binding Rossmann-fold domains"/>
    <property type="match status" value="1"/>
</dbReference>
<name>YDIB_ECO27</name>
<comment type="function">
    <text evidence="1">The actual biological function of YdiB remains unclear, nor is it known whether 3-dehydroshikimate or quinate represents the natural substrate. Catalyzes the reversible NAD-dependent reduction of both 3-dehydroshikimate (DHSA) and 3-dehydroquinate to yield shikimate (SA) and quinate, respectively. It can use both NAD or NADP for catalysis, however it has higher catalytic efficiency with NAD.</text>
</comment>
<comment type="catalytic activity">
    <reaction evidence="1">
        <text>L-quinate + NAD(+) = 3-dehydroquinate + NADH + H(+)</text>
        <dbReference type="Rhea" id="RHEA:22364"/>
        <dbReference type="ChEBI" id="CHEBI:15378"/>
        <dbReference type="ChEBI" id="CHEBI:29751"/>
        <dbReference type="ChEBI" id="CHEBI:32364"/>
        <dbReference type="ChEBI" id="CHEBI:57540"/>
        <dbReference type="ChEBI" id="CHEBI:57945"/>
        <dbReference type="EC" id="1.1.1.282"/>
    </reaction>
</comment>
<comment type="catalytic activity">
    <reaction evidence="1">
        <text>L-quinate + NADP(+) = 3-dehydroquinate + NADPH + H(+)</text>
        <dbReference type="Rhea" id="RHEA:18425"/>
        <dbReference type="ChEBI" id="CHEBI:15378"/>
        <dbReference type="ChEBI" id="CHEBI:29751"/>
        <dbReference type="ChEBI" id="CHEBI:32364"/>
        <dbReference type="ChEBI" id="CHEBI:57783"/>
        <dbReference type="ChEBI" id="CHEBI:58349"/>
        <dbReference type="EC" id="1.1.1.282"/>
    </reaction>
</comment>
<comment type="catalytic activity">
    <reaction evidence="1">
        <text>shikimate + NADP(+) = 3-dehydroshikimate + NADPH + H(+)</text>
        <dbReference type="Rhea" id="RHEA:17737"/>
        <dbReference type="ChEBI" id="CHEBI:15378"/>
        <dbReference type="ChEBI" id="CHEBI:16630"/>
        <dbReference type="ChEBI" id="CHEBI:36208"/>
        <dbReference type="ChEBI" id="CHEBI:57783"/>
        <dbReference type="ChEBI" id="CHEBI:58349"/>
        <dbReference type="EC" id="1.1.1.282"/>
    </reaction>
</comment>
<comment type="catalytic activity">
    <reaction evidence="1">
        <text>shikimate + NAD(+) = 3-dehydroshikimate + NADH + H(+)</text>
        <dbReference type="Rhea" id="RHEA:17741"/>
        <dbReference type="ChEBI" id="CHEBI:15378"/>
        <dbReference type="ChEBI" id="CHEBI:16630"/>
        <dbReference type="ChEBI" id="CHEBI:36208"/>
        <dbReference type="ChEBI" id="CHEBI:57540"/>
        <dbReference type="ChEBI" id="CHEBI:57945"/>
        <dbReference type="EC" id="1.1.1.282"/>
    </reaction>
</comment>
<comment type="pathway">
    <text evidence="1">Metabolic intermediate biosynthesis; chorismate biosynthesis; chorismate from D-erythrose 4-phosphate and phosphoenolpyruvate: step 4/7.</text>
</comment>
<comment type="subunit">
    <text evidence="1">Homodimer.</text>
</comment>
<comment type="similarity">
    <text evidence="1">Belongs to the shikimate dehydrogenase family.</text>
</comment>
<proteinExistence type="inferred from homology"/>
<sequence length="288" mass="31242">MDVTAKYELIGLMAYPIRHSLSPEMQNKALEKAGLPFTYMAFEVDNDSFPAAIEGLKALKMRGTGVSMPNKQLACEYVDELTPAAKLVGAINTIVNDDGYLRGYNTDGTGHIRAIKESGFDIKGKTMVLLGAGGASTAIGAQGAIEGLKEIKLFNRRDEFFDKALAFAQRVNENTDCVVTVTDLADQQAFAEALASADILTNGTKVGMKPLENESLVNDISLLHPGLLVTECVYNPHMTKLLQQAQQAGCKTIDGYGMLLWQGAEQFTLWTGKDFPLEYVKQVMGFGA</sequence>